<name>BTB14_CAEEL</name>
<sequence>MSAMRRCTCFIICLLTSYTYGTTELVEYTRGDIEFDSSNGEKIIDISTTKGIRCEWKVSSDYYTACFKWKFIWDQVDKYEVAGFSGQITVNYTTDSEGQKTRTVKVNLTDPGGEIWYNVSRSRYLSTYYASYNYTLEPQKRHMEAMELDKYFAPVDDRDAVLIVEGKKLHVSSCFLSFHSTYFHDLFEYDNSTSLLNIEIPVEGVSYEDLGLLLSVVHSTATFPNDGNSKKLLELASQFQTPYVLGLVENHLLTNTFAWNETLMLLADKYGLMRLLGKSIRRIDSIEKARQLKDSVFLELSDSAKVKVAYHMIQLL</sequence>
<gene>
    <name type="primary">btb-14</name>
    <name type="ORF">Y57A10B.3</name>
</gene>
<organism>
    <name type="scientific">Caenorhabditis elegans</name>
    <dbReference type="NCBI Taxonomy" id="6239"/>
    <lineage>
        <taxon>Eukaryota</taxon>
        <taxon>Metazoa</taxon>
        <taxon>Ecdysozoa</taxon>
        <taxon>Nematoda</taxon>
        <taxon>Chromadorea</taxon>
        <taxon>Rhabditida</taxon>
        <taxon>Rhabditina</taxon>
        <taxon>Rhabditomorpha</taxon>
        <taxon>Rhabditoidea</taxon>
        <taxon>Rhabditidae</taxon>
        <taxon>Peloderinae</taxon>
        <taxon>Caenorhabditis</taxon>
    </lineage>
</organism>
<evidence type="ECO:0000255" key="1"/>
<evidence type="ECO:0000255" key="2">
    <source>
        <dbReference type="PROSITE-ProRule" id="PRU00037"/>
    </source>
</evidence>
<evidence type="ECO:0000269" key="3">
    <source>
    </source>
</evidence>
<evidence type="ECO:0000269" key="4">
    <source>
    </source>
</evidence>
<evidence type="ECO:0000305" key="5"/>
<reference key="1">
    <citation type="journal article" date="1998" name="Science">
        <title>Genome sequence of the nematode C. elegans: a platform for investigating biology.</title>
        <authorList>
            <consortium name="The C. elegans sequencing consortium"/>
        </authorList>
    </citation>
    <scope>NUCLEOTIDE SEQUENCE [LARGE SCALE GENOMIC DNA]</scope>
    <source>
        <strain>Bristol N2</strain>
    </source>
</reference>
<reference key="2">
    <citation type="journal article" date="2003" name="Nat. Biotechnol.">
        <title>Lectin affinity capture, isotope-coded tagging and mass spectrometry to identify N-linked glycoproteins.</title>
        <authorList>
            <person name="Kaji H."/>
            <person name="Saito H."/>
            <person name="Yamauchi Y."/>
            <person name="Shinkawa T."/>
            <person name="Taoka M."/>
            <person name="Hirabayashi J."/>
            <person name="Kasai K."/>
            <person name="Takahashi N."/>
            <person name="Isobe T."/>
        </authorList>
    </citation>
    <scope>GLYCOSYLATION [LARGE SCALE ANALYSIS] AT ASN-107</scope>
    <scope>IDENTIFICATION BY MASS SPECTROMETRY</scope>
    <source>
        <strain>Bristol N2</strain>
    </source>
</reference>
<reference key="3">
    <citation type="journal article" date="2007" name="Mol. Cell. Proteomics">
        <title>Proteomics reveals N-linked glycoprotein diversity in Caenorhabditis elegans and suggests an atypical translocation mechanism for integral membrane proteins.</title>
        <authorList>
            <person name="Kaji H."/>
            <person name="Kamiie J."/>
            <person name="Kawakami H."/>
            <person name="Kido K."/>
            <person name="Yamauchi Y."/>
            <person name="Shinkawa T."/>
            <person name="Taoka M."/>
            <person name="Takahashi N."/>
            <person name="Isobe T."/>
        </authorList>
    </citation>
    <scope>GLYCOSYLATION [LARGE SCALE ANALYSIS] AT ASN-107 AND ASN-118</scope>
    <scope>IDENTIFICATION BY MASS SPECTROMETRY</scope>
    <source>
        <strain>Bristol N2</strain>
    </source>
</reference>
<proteinExistence type="evidence at protein level"/>
<protein>
    <recommendedName>
        <fullName>BTB/POZ domain-containing protein Y57A10B.3</fullName>
    </recommendedName>
</protein>
<dbReference type="EMBL" id="AL032647">
    <property type="protein sequence ID" value="CAA21690.1"/>
    <property type="molecule type" value="Genomic_DNA"/>
</dbReference>
<dbReference type="PIR" id="T27194">
    <property type="entry name" value="T27194"/>
</dbReference>
<dbReference type="RefSeq" id="NP_496626.1">
    <property type="nucleotide sequence ID" value="NM_064225.6"/>
</dbReference>
<dbReference type="SMR" id="Q9XWH8"/>
<dbReference type="FunCoup" id="Q9XWH8">
    <property type="interactions" value="14"/>
</dbReference>
<dbReference type="STRING" id="6239.Y57A10B.3.1"/>
<dbReference type="GlyCosmos" id="Q9XWH8">
    <property type="glycosylation" value="6 sites, No reported glycans"/>
</dbReference>
<dbReference type="iPTMnet" id="Q9XWH8"/>
<dbReference type="PaxDb" id="6239-Y57A10B.3"/>
<dbReference type="PeptideAtlas" id="Q9XWH8"/>
<dbReference type="EnsemblMetazoa" id="Y57A10B.3.1">
    <property type="protein sequence ID" value="Y57A10B.3.1"/>
    <property type="gene ID" value="WBGene00013275"/>
</dbReference>
<dbReference type="GeneID" id="174877"/>
<dbReference type="KEGG" id="cel:CELE_Y57A10B.3"/>
<dbReference type="AGR" id="WB:WBGene00013275"/>
<dbReference type="CTD" id="174877"/>
<dbReference type="WormBase" id="Y57A10B.3">
    <property type="protein sequence ID" value="CE20324"/>
    <property type="gene ID" value="WBGene00013275"/>
    <property type="gene designation" value="btb-14"/>
</dbReference>
<dbReference type="eggNOG" id="ENOG502RFNH">
    <property type="taxonomic scope" value="Eukaryota"/>
</dbReference>
<dbReference type="GeneTree" id="ENSGT00530000064619"/>
<dbReference type="HOGENOM" id="CLU_036654_0_1_1"/>
<dbReference type="InParanoid" id="Q9XWH8"/>
<dbReference type="OrthoDB" id="6156804at2759"/>
<dbReference type="PhylomeDB" id="Q9XWH8"/>
<dbReference type="PRO" id="PR:Q9XWH8"/>
<dbReference type="Proteomes" id="UP000001940">
    <property type="component" value="Chromosome II"/>
</dbReference>
<dbReference type="Bgee" id="WBGene00013275">
    <property type="expression patterns" value="Expressed in larva and 1 other cell type or tissue"/>
</dbReference>
<dbReference type="GO" id="GO:0005576">
    <property type="term" value="C:extracellular region"/>
    <property type="evidence" value="ECO:0007669"/>
    <property type="project" value="UniProtKB-SubCell"/>
</dbReference>
<dbReference type="CDD" id="cd18186">
    <property type="entry name" value="BTB_POZ_ZBTB_KLHL-like"/>
    <property type="match status" value="1"/>
</dbReference>
<dbReference type="Gene3D" id="3.30.710.10">
    <property type="entry name" value="Potassium Channel Kv1.1, Chain A"/>
    <property type="match status" value="1"/>
</dbReference>
<dbReference type="InterPro" id="IPR000210">
    <property type="entry name" value="BTB/POZ_dom"/>
</dbReference>
<dbReference type="InterPro" id="IPR011333">
    <property type="entry name" value="SKP1/BTB/POZ_sf"/>
</dbReference>
<dbReference type="PANTHER" id="PTHR22744:SF14">
    <property type="entry name" value="BTB DOMAIN-CONTAINING PROTEIN-RELATED"/>
    <property type="match status" value="1"/>
</dbReference>
<dbReference type="PANTHER" id="PTHR22744">
    <property type="entry name" value="HELIX LOOP HELIX PROTEIN 21-RELATED"/>
    <property type="match status" value="1"/>
</dbReference>
<dbReference type="Pfam" id="PF00651">
    <property type="entry name" value="BTB"/>
    <property type="match status" value="1"/>
</dbReference>
<dbReference type="SMART" id="SM00225">
    <property type="entry name" value="BTB"/>
    <property type="match status" value="1"/>
</dbReference>
<dbReference type="SUPFAM" id="SSF54695">
    <property type="entry name" value="POZ domain"/>
    <property type="match status" value="1"/>
</dbReference>
<dbReference type="PROSITE" id="PS50097">
    <property type="entry name" value="BTB"/>
    <property type="match status" value="1"/>
</dbReference>
<keyword id="KW-0325">Glycoprotein</keyword>
<keyword id="KW-1185">Reference proteome</keyword>
<keyword id="KW-0964">Secreted</keyword>
<keyword id="KW-0732">Signal</keyword>
<feature type="signal peptide" evidence="1">
    <location>
        <begin position="1"/>
        <end position="21"/>
    </location>
</feature>
<feature type="chain" id="PRO_0000248531" description="BTB/POZ domain-containing protein Y57A10B.3">
    <location>
        <begin position="22"/>
        <end position="316"/>
    </location>
</feature>
<feature type="domain" description="BTB" evidence="2">
    <location>
        <begin position="158"/>
        <end position="226"/>
    </location>
</feature>
<feature type="glycosylation site" description="N-linked (GlcNAc...) asparagine" evidence="1">
    <location>
        <position position="91"/>
    </location>
</feature>
<feature type="glycosylation site" description="N-linked (GlcNAc...) asparagine" evidence="3 4">
    <location>
        <position position="107"/>
    </location>
</feature>
<feature type="glycosylation site" description="N-linked (GlcNAc...) asparagine" evidence="4">
    <location>
        <position position="118"/>
    </location>
</feature>
<feature type="glycosylation site" description="N-linked (GlcNAc...) asparagine" evidence="1">
    <location>
        <position position="133"/>
    </location>
</feature>
<feature type="glycosylation site" description="N-linked (GlcNAc...) asparagine" evidence="1">
    <location>
        <position position="191"/>
    </location>
</feature>
<feature type="glycosylation site" description="N-linked (GlcNAc...) asparagine" evidence="1">
    <location>
        <position position="260"/>
    </location>
</feature>
<comment type="subcellular location">
    <subcellularLocation>
        <location evidence="5">Secreted</location>
    </subcellularLocation>
</comment>
<accession>Q9XWH8</accession>